<dbReference type="EC" id="1.1.1.132"/>
<dbReference type="EMBL" id="AF001555">
    <property type="protein sequence ID" value="AAB58939.1"/>
    <property type="molecule type" value="Genomic_DNA"/>
</dbReference>
<dbReference type="RefSeq" id="WP_002552256.1">
    <property type="nucleotide sequence ID" value="NZ_RBUR01000168.1"/>
</dbReference>
<dbReference type="SMR" id="O07299"/>
<dbReference type="PATRIC" id="fig|319.14.peg.1298"/>
<dbReference type="OMA" id="CQDKTLN"/>
<dbReference type="UniPathway" id="UPA00286"/>
<dbReference type="GO" id="GO:0047919">
    <property type="term" value="F:GDP-mannose 6-dehydrogenase activity"/>
    <property type="evidence" value="ECO:0007669"/>
    <property type="project" value="UniProtKB-EC"/>
</dbReference>
<dbReference type="GO" id="GO:0051287">
    <property type="term" value="F:NAD binding"/>
    <property type="evidence" value="ECO:0007669"/>
    <property type="project" value="InterPro"/>
</dbReference>
<dbReference type="GO" id="GO:0042121">
    <property type="term" value="P:alginic acid biosynthetic process"/>
    <property type="evidence" value="ECO:0007669"/>
    <property type="project" value="UniProtKB-UniPathway"/>
</dbReference>
<dbReference type="Gene3D" id="1.20.5.170">
    <property type="match status" value="1"/>
</dbReference>
<dbReference type="Gene3D" id="3.40.50.720">
    <property type="entry name" value="NAD(P)-binding Rossmann-like Domain"/>
    <property type="match status" value="2"/>
</dbReference>
<dbReference type="InterPro" id="IPR008927">
    <property type="entry name" value="6-PGluconate_DH-like_C_sf"/>
</dbReference>
<dbReference type="InterPro" id="IPR028358">
    <property type="entry name" value="GDPman_DH"/>
</dbReference>
<dbReference type="InterPro" id="IPR036291">
    <property type="entry name" value="NAD(P)-bd_dom_sf"/>
</dbReference>
<dbReference type="InterPro" id="IPR017476">
    <property type="entry name" value="UDP-Glc/GDP-Man"/>
</dbReference>
<dbReference type="InterPro" id="IPR014027">
    <property type="entry name" value="UDP-Glc/GDP-Man_DH_C"/>
</dbReference>
<dbReference type="InterPro" id="IPR036220">
    <property type="entry name" value="UDP-Glc/GDP-Man_DH_C_sf"/>
</dbReference>
<dbReference type="InterPro" id="IPR014026">
    <property type="entry name" value="UDP-Glc/GDP-Man_DH_dimer"/>
</dbReference>
<dbReference type="InterPro" id="IPR001732">
    <property type="entry name" value="UDP-Glc/GDP-Man_DH_N"/>
</dbReference>
<dbReference type="NCBIfam" id="TIGR03026">
    <property type="entry name" value="NDP-sugDHase"/>
    <property type="match status" value="1"/>
</dbReference>
<dbReference type="PANTHER" id="PTHR43750:SF1">
    <property type="entry name" value="GDP-MANNOSE 6-DEHYDROGENASE"/>
    <property type="match status" value="1"/>
</dbReference>
<dbReference type="PANTHER" id="PTHR43750">
    <property type="entry name" value="UDP-GLUCOSE 6-DEHYDROGENASE TUAD"/>
    <property type="match status" value="1"/>
</dbReference>
<dbReference type="Pfam" id="PF00984">
    <property type="entry name" value="UDPG_MGDP_dh"/>
    <property type="match status" value="1"/>
</dbReference>
<dbReference type="Pfam" id="PF03720">
    <property type="entry name" value="UDPG_MGDP_dh_C"/>
    <property type="match status" value="1"/>
</dbReference>
<dbReference type="Pfam" id="PF03721">
    <property type="entry name" value="UDPG_MGDP_dh_N"/>
    <property type="match status" value="1"/>
</dbReference>
<dbReference type="PIRSF" id="PIRSF500135">
    <property type="entry name" value="GDPman_DH"/>
    <property type="match status" value="1"/>
</dbReference>
<dbReference type="PIRSF" id="PIRSF000124">
    <property type="entry name" value="UDPglc_GDPman_dh"/>
    <property type="match status" value="1"/>
</dbReference>
<dbReference type="SMART" id="SM00984">
    <property type="entry name" value="UDPG_MGDP_dh_C"/>
    <property type="match status" value="1"/>
</dbReference>
<dbReference type="SUPFAM" id="SSF48179">
    <property type="entry name" value="6-phosphogluconate dehydrogenase C-terminal domain-like"/>
    <property type="match status" value="1"/>
</dbReference>
<dbReference type="SUPFAM" id="SSF51735">
    <property type="entry name" value="NAD(P)-binding Rossmann-fold domains"/>
    <property type="match status" value="1"/>
</dbReference>
<dbReference type="SUPFAM" id="SSF52413">
    <property type="entry name" value="UDP-glucose/GDP-mannose dehydrogenase C-terminal domain"/>
    <property type="match status" value="1"/>
</dbReference>
<proteinExistence type="inferred from homology"/>
<evidence type="ECO:0000250" key="1"/>
<evidence type="ECO:0000250" key="2">
    <source>
        <dbReference type="UniProtKB" id="P11759"/>
    </source>
</evidence>
<evidence type="ECO:0000305" key="3"/>
<comment type="function">
    <text evidence="1">Catalyzes the oxidation of guanosine diphospho-D-mannose (GDP-D-mannose) to GDP-D-mannuronic acid, a precursor for alginate polymerization. The alginate layer causes a mucoid phenotype and provides a protective barrier against host immune defenses and antibiotics (By similarity).</text>
</comment>
<comment type="catalytic activity">
    <reaction>
        <text>GDP-alpha-D-mannose + 2 NAD(+) + H2O = GDP-alpha-D-mannuronate + 2 NADH + 3 H(+)</text>
        <dbReference type="Rhea" id="RHEA:21728"/>
        <dbReference type="ChEBI" id="CHEBI:15377"/>
        <dbReference type="ChEBI" id="CHEBI:15378"/>
        <dbReference type="ChEBI" id="CHEBI:57527"/>
        <dbReference type="ChEBI" id="CHEBI:57540"/>
        <dbReference type="ChEBI" id="CHEBI:57945"/>
        <dbReference type="ChEBI" id="CHEBI:84886"/>
        <dbReference type="EC" id="1.1.1.132"/>
    </reaction>
</comment>
<comment type="pathway">
    <text>Glycan biosynthesis; alginate biosynthesis.</text>
</comment>
<comment type="similarity">
    <text evidence="3">Belongs to the UDP-glucose/GDP-mannose dehydrogenase family.</text>
</comment>
<gene>
    <name type="primary">algD</name>
</gene>
<organism>
    <name type="scientific">Pseudomonas savastanoi pv. phaseolicola</name>
    <name type="common">Pseudomonas syringae pv. phaseolicola</name>
    <dbReference type="NCBI Taxonomy" id="319"/>
    <lineage>
        <taxon>Bacteria</taxon>
        <taxon>Pseudomonadati</taxon>
        <taxon>Pseudomonadota</taxon>
        <taxon>Gammaproteobacteria</taxon>
        <taxon>Pseudomonadales</taxon>
        <taxon>Pseudomonadaceae</taxon>
        <taxon>Pseudomonas</taxon>
    </lineage>
</organism>
<accession>O07299</accession>
<reference key="1">
    <citation type="submission" date="1997-04" db="EMBL/GenBank/DDBJ databases">
        <title>Isolation and characterization of the algD gene from Pseudomonas syringae pv. phaseolicola and distribution among other pseudomonads and related organisms.</title>
        <authorList>
            <person name="Koopmann B."/>
            <person name="Noellenburg M."/>
            <person name="Rudolph K."/>
        </authorList>
    </citation>
    <scope>NUCLEOTIDE SEQUENCE [GENOMIC DNA]</scope>
    <source>
        <strain>S2-1</strain>
    </source>
</reference>
<name>ALGD_PSESH</name>
<keyword id="KW-0016">Alginate biosynthesis</keyword>
<keyword id="KW-0520">NAD</keyword>
<keyword id="KW-0560">Oxidoreductase</keyword>
<protein>
    <recommendedName>
        <fullName>GDP-mannose 6-dehydrogenase</fullName>
        <shortName>GMD</shortName>
        <ecNumber>1.1.1.132</ecNumber>
    </recommendedName>
</protein>
<sequence length="438" mass="47595">MRISIFGLGYVGAVCAGCLSARGHDVVGVDISSTKIDLINNGKSPIVEPGLEELLQKGISTGKLRGTTDFAEAIRATDLSMICVGTPSKKNGDLELDYIESVCREIGYVLRDKATRHTIVVRSTVLPGTVANVVIPILEDCSGKKAGVDFGVAVNPEFLRESTAIKDYDLPPMTVIGEFDKASGDVLQSLYEELDAPIIRKDIAVAEMIKYTCNVWHATKVTFANEIGNIAKAVGVDGREVMDVVCQDKALNLSQYYMRPGFAFGGSCLPKDVRALTYRASSLDVEAPLLNSLMRSNTSQVQNAFDMVASYDTRKVALLGLSFKAGTDDLRESPLVELAEMLIGKGFDLSIFDSNVEYARVHGANKDYIESKIPHVSSLLNSDFDQVINDSDVIILGNRDERFRALANKTPEGKRVIDLVGFMTNATSEDGRAEGICW</sequence>
<feature type="chain" id="PRO_0000074069" description="GDP-mannose 6-dehydrogenase">
    <location>
        <begin position="1"/>
        <end position="438"/>
    </location>
</feature>
<feature type="active site" evidence="1">
    <location>
        <position position="268"/>
    </location>
</feature>
<feature type="binding site" description="in chain A" evidence="2">
    <location>
        <position position="10"/>
    </location>
    <ligand>
        <name>NAD(+)</name>
        <dbReference type="ChEBI" id="CHEBI:57540"/>
        <note>ligand shared between homodimeric partners</note>
    </ligand>
</feature>
<feature type="binding site" description="in chain A" evidence="2">
    <location>
        <position position="11"/>
    </location>
    <ligand>
        <name>NAD(+)</name>
        <dbReference type="ChEBI" id="CHEBI:57540"/>
        <note>ligand shared between homodimeric partners</note>
    </ligand>
</feature>
<feature type="binding site" description="in chain A" evidence="2">
    <location>
        <position position="30"/>
    </location>
    <ligand>
        <name>NAD(+)</name>
        <dbReference type="ChEBI" id="CHEBI:57540"/>
        <note>ligand shared between homodimeric partners</note>
    </ligand>
</feature>
<feature type="binding site" description="in chain A" evidence="2">
    <location>
        <position position="35"/>
    </location>
    <ligand>
        <name>NAD(+)</name>
        <dbReference type="ChEBI" id="CHEBI:57540"/>
        <note>ligand shared between homodimeric partners</note>
    </ligand>
</feature>
<feature type="binding site" description="in chain A" evidence="2">
    <location>
        <position position="86"/>
    </location>
    <ligand>
        <name>NAD(+)</name>
        <dbReference type="ChEBI" id="CHEBI:57540"/>
        <note>ligand shared between homodimeric partners</note>
    </ligand>
</feature>
<feature type="binding site" description="in chain A" evidence="2">
    <location>
        <position position="124"/>
    </location>
    <ligand>
        <name>NAD(+)</name>
        <dbReference type="ChEBI" id="CHEBI:57540"/>
        <note>ligand shared between homodimeric partners</note>
    </ligand>
</feature>
<feature type="binding site" description="in chain A" evidence="2">
    <location>
        <position position="161"/>
    </location>
    <ligand>
        <name>GDP-alpha-D-mannuronate</name>
        <dbReference type="ChEBI" id="CHEBI:84886"/>
        <note>ligand shared between homodimeric partners</note>
    </ligand>
</feature>
<feature type="binding site" description="in chain A" evidence="2">
    <location>
        <position position="210"/>
    </location>
    <ligand>
        <name>GDP-alpha-D-mannuronate</name>
        <dbReference type="ChEBI" id="CHEBI:84886"/>
        <note>ligand shared between homodimeric partners</note>
    </ligand>
</feature>
<feature type="binding site" description="in chain A" evidence="2">
    <location>
        <position position="214"/>
    </location>
    <ligand>
        <name>GDP-alpha-D-mannuronate</name>
        <dbReference type="ChEBI" id="CHEBI:84886"/>
        <note>ligand shared between homodimeric partners</note>
    </ligand>
</feature>
<feature type="binding site" description="in chain A" evidence="2">
    <location>
        <position position="217"/>
    </location>
    <ligand>
        <name>GDP-alpha-D-mannuronate</name>
        <dbReference type="ChEBI" id="CHEBI:84886"/>
        <note>ligand shared between homodimeric partners</note>
    </ligand>
</feature>
<feature type="binding site" description="in chain A" evidence="2">
    <location>
        <position position="225"/>
    </location>
    <ligand>
        <name>GDP-alpha-D-mannuronate</name>
        <dbReference type="ChEBI" id="CHEBI:84886"/>
        <note>ligand shared between homodimeric partners</note>
    </ligand>
</feature>
<feature type="binding site" description="in chain B" evidence="2">
    <location>
        <position position="256"/>
    </location>
    <ligand>
        <name>GDP-alpha-D-mannuronate</name>
        <dbReference type="ChEBI" id="CHEBI:84886"/>
        <note>ligand shared between homodimeric partners</note>
    </ligand>
</feature>
<feature type="binding site" description="in chain B" evidence="2">
    <location>
        <position position="257"/>
    </location>
    <ligand>
        <name>GDP-alpha-D-mannuronate</name>
        <dbReference type="ChEBI" id="CHEBI:84886"/>
        <note>ligand shared between homodimeric partners</note>
    </ligand>
</feature>
<feature type="binding site" description="in chain B" evidence="2">
    <location>
        <position position="259"/>
    </location>
    <ligand>
        <name>GDP-alpha-D-mannuronate</name>
        <dbReference type="ChEBI" id="CHEBI:84886"/>
        <note>ligand shared between homodimeric partners</note>
    </ligand>
</feature>
<feature type="binding site" description="in chain B" evidence="2">
    <location>
        <position position="262"/>
    </location>
    <ligand>
        <name>GDP-alpha-D-mannuronate</name>
        <dbReference type="ChEBI" id="CHEBI:84886"/>
        <note>ligand shared between homodimeric partners</note>
    </ligand>
</feature>
<feature type="binding site" description="in chain B" evidence="2">
    <location>
        <position position="265"/>
    </location>
    <ligand>
        <name>GDP-alpha-D-mannuronate</name>
        <dbReference type="ChEBI" id="CHEBI:84886"/>
        <note>ligand shared between homodimeric partners</note>
    </ligand>
</feature>
<feature type="binding site" description="in chain B" evidence="2">
    <location>
        <position position="271"/>
    </location>
    <ligand>
        <name>NAD(+)</name>
        <dbReference type="ChEBI" id="CHEBI:57540"/>
        <note>ligand shared between homodimeric partners</note>
    </ligand>
</feature>
<feature type="binding site" description="in chain B" evidence="2">
    <location>
        <position position="324"/>
    </location>
    <ligand>
        <name>GDP-alpha-D-mannuronate</name>
        <dbReference type="ChEBI" id="CHEBI:84886"/>
        <note>ligand shared between homodimeric partners</note>
    </ligand>
</feature>
<feature type="binding site" description="in chain B" evidence="2">
    <location>
        <position position="331"/>
    </location>
    <ligand>
        <name>NAD(+)</name>
        <dbReference type="ChEBI" id="CHEBI:57540"/>
        <note>ligand shared between homodimeric partners</note>
    </ligand>
</feature>